<reference key="1">
    <citation type="journal article" date="2001" name="Science">
        <title>Comparative genomics of Listeria species.</title>
        <authorList>
            <person name="Glaser P."/>
            <person name="Frangeul L."/>
            <person name="Buchrieser C."/>
            <person name="Rusniok C."/>
            <person name="Amend A."/>
            <person name="Baquero F."/>
            <person name="Berche P."/>
            <person name="Bloecker H."/>
            <person name="Brandt P."/>
            <person name="Chakraborty T."/>
            <person name="Charbit A."/>
            <person name="Chetouani F."/>
            <person name="Couve E."/>
            <person name="de Daruvar A."/>
            <person name="Dehoux P."/>
            <person name="Domann E."/>
            <person name="Dominguez-Bernal G."/>
            <person name="Duchaud E."/>
            <person name="Durant L."/>
            <person name="Dussurget O."/>
            <person name="Entian K.-D."/>
            <person name="Fsihi H."/>
            <person name="Garcia-del Portillo F."/>
            <person name="Garrido P."/>
            <person name="Gautier L."/>
            <person name="Goebel W."/>
            <person name="Gomez-Lopez N."/>
            <person name="Hain T."/>
            <person name="Hauf J."/>
            <person name="Jackson D."/>
            <person name="Jones L.-M."/>
            <person name="Kaerst U."/>
            <person name="Kreft J."/>
            <person name="Kuhn M."/>
            <person name="Kunst F."/>
            <person name="Kurapkat G."/>
            <person name="Madueno E."/>
            <person name="Maitournam A."/>
            <person name="Mata Vicente J."/>
            <person name="Ng E."/>
            <person name="Nedjari H."/>
            <person name="Nordsiek G."/>
            <person name="Novella S."/>
            <person name="de Pablos B."/>
            <person name="Perez-Diaz J.-C."/>
            <person name="Purcell R."/>
            <person name="Remmel B."/>
            <person name="Rose M."/>
            <person name="Schlueter T."/>
            <person name="Simoes N."/>
            <person name="Tierrez A."/>
            <person name="Vazquez-Boland J.-A."/>
            <person name="Voss H."/>
            <person name="Wehland J."/>
            <person name="Cossart P."/>
        </authorList>
    </citation>
    <scope>NUCLEOTIDE SEQUENCE [LARGE SCALE GENOMIC DNA]</scope>
    <source>
        <strain>ATCC BAA-679 / EGD-e</strain>
    </source>
</reference>
<proteinExistence type="inferred from homology"/>
<gene>
    <name evidence="1" type="primary">ftsL</name>
    <name type="ordered locus">lmo2040</name>
</gene>
<name>FTSL_LISMO</name>
<accession>Q929X7</accession>
<evidence type="ECO:0000255" key="1">
    <source>
        <dbReference type="HAMAP-Rule" id="MF_00910"/>
    </source>
</evidence>
<evidence type="ECO:0000256" key="2">
    <source>
        <dbReference type="SAM" id="MobiDB-lite"/>
    </source>
</evidence>
<protein>
    <recommendedName>
        <fullName evidence="1">Cell division protein FtsL</fullName>
    </recommendedName>
</protein>
<dbReference type="EMBL" id="AL591982">
    <property type="protein sequence ID" value="CAD00118.1"/>
    <property type="molecule type" value="Genomic_DNA"/>
</dbReference>
<dbReference type="PIR" id="AH1329">
    <property type="entry name" value="AH1329"/>
</dbReference>
<dbReference type="PIR" id="AH1700">
    <property type="entry name" value="AH1700"/>
</dbReference>
<dbReference type="RefSeq" id="NP_465564.1">
    <property type="nucleotide sequence ID" value="NC_003210.1"/>
</dbReference>
<dbReference type="RefSeq" id="WP_003723754.1">
    <property type="nucleotide sequence ID" value="NZ_CP149495.1"/>
</dbReference>
<dbReference type="SMR" id="Q929X7"/>
<dbReference type="STRING" id="169963.gene:17594725"/>
<dbReference type="PaxDb" id="169963-lmo2040"/>
<dbReference type="EnsemblBacteria" id="CAD00118">
    <property type="protein sequence ID" value="CAD00118"/>
    <property type="gene ID" value="CAD00118"/>
</dbReference>
<dbReference type="GeneID" id="93235485"/>
<dbReference type="GeneID" id="987937"/>
<dbReference type="KEGG" id="lmo:lmo2040"/>
<dbReference type="PATRIC" id="fig|169963.11.peg.2088"/>
<dbReference type="eggNOG" id="COG4839">
    <property type="taxonomic scope" value="Bacteria"/>
</dbReference>
<dbReference type="HOGENOM" id="CLU_157825_1_1_9"/>
<dbReference type="OrthoDB" id="14664at2"/>
<dbReference type="PhylomeDB" id="Q929X7"/>
<dbReference type="BioCyc" id="LMON169963:LMO2040-MONOMER"/>
<dbReference type="Proteomes" id="UP000000817">
    <property type="component" value="Chromosome"/>
</dbReference>
<dbReference type="GO" id="GO:0032153">
    <property type="term" value="C:cell division site"/>
    <property type="evidence" value="ECO:0007669"/>
    <property type="project" value="UniProtKB-UniRule"/>
</dbReference>
<dbReference type="GO" id="GO:0005886">
    <property type="term" value="C:plasma membrane"/>
    <property type="evidence" value="ECO:0007669"/>
    <property type="project" value="UniProtKB-SubCell"/>
</dbReference>
<dbReference type="GO" id="GO:0043093">
    <property type="term" value="P:FtsZ-dependent cytokinesis"/>
    <property type="evidence" value="ECO:0007669"/>
    <property type="project" value="UniProtKB-UniRule"/>
</dbReference>
<dbReference type="HAMAP" id="MF_00910">
    <property type="entry name" value="FtsL"/>
    <property type="match status" value="1"/>
</dbReference>
<dbReference type="InterPro" id="IPR011922">
    <property type="entry name" value="Cell_div_FtsL"/>
</dbReference>
<dbReference type="InterPro" id="IPR007060">
    <property type="entry name" value="FtsL/DivIC"/>
</dbReference>
<dbReference type="NCBIfam" id="TIGR02209">
    <property type="entry name" value="ftsL_broad"/>
    <property type="match status" value="1"/>
</dbReference>
<dbReference type="Pfam" id="PF04977">
    <property type="entry name" value="DivIC"/>
    <property type="match status" value="1"/>
</dbReference>
<feature type="chain" id="PRO_0000414559" description="Cell division protein FtsL">
    <location>
        <begin position="1"/>
        <end position="120"/>
    </location>
</feature>
<feature type="topological domain" description="Cytoplasmic" evidence="1">
    <location>
        <begin position="1"/>
        <end position="37"/>
    </location>
</feature>
<feature type="transmembrane region" description="Helical" evidence="1">
    <location>
        <begin position="38"/>
        <end position="58"/>
    </location>
</feature>
<feature type="topological domain" description="Extracellular" evidence="1">
    <location>
        <begin position="59"/>
        <end position="120"/>
    </location>
</feature>
<feature type="region of interest" description="Disordered" evidence="2">
    <location>
        <begin position="1"/>
        <end position="22"/>
    </location>
</feature>
<feature type="compositionally biased region" description="Basic and acidic residues" evidence="2">
    <location>
        <begin position="13"/>
        <end position="22"/>
    </location>
</feature>
<comment type="function">
    <text evidence="1">Essential cell division protein.</text>
</comment>
<comment type="subcellular location">
    <subcellularLocation>
        <location evidence="1">Cell membrane</location>
        <topology evidence="1">Single-pass type II membrane protein</topology>
    </subcellularLocation>
    <text evidence="1">Localizes to the division septum where it forms a ring structure.</text>
</comment>
<comment type="similarity">
    <text evidence="1">Belongs to the FtsL family.</text>
</comment>
<sequence length="120" mass="13655">MSNVAYKSNLEPNRVHREAEQPKKQILKRGQMTLGEKVIITIALAIVLVVAFRIISVQAQIYTVNQEIQTKETKILEQQKSNEDLKVEVKDLGRYERILKIAKEKGLKLDGDNVKVVDGQ</sequence>
<keyword id="KW-0131">Cell cycle</keyword>
<keyword id="KW-0132">Cell division</keyword>
<keyword id="KW-1003">Cell membrane</keyword>
<keyword id="KW-0472">Membrane</keyword>
<keyword id="KW-1185">Reference proteome</keyword>
<keyword id="KW-0812">Transmembrane</keyword>
<keyword id="KW-1133">Transmembrane helix</keyword>
<organism>
    <name type="scientific">Listeria monocytogenes serovar 1/2a (strain ATCC BAA-679 / EGD-e)</name>
    <dbReference type="NCBI Taxonomy" id="169963"/>
    <lineage>
        <taxon>Bacteria</taxon>
        <taxon>Bacillati</taxon>
        <taxon>Bacillota</taxon>
        <taxon>Bacilli</taxon>
        <taxon>Bacillales</taxon>
        <taxon>Listeriaceae</taxon>
        <taxon>Listeria</taxon>
    </lineage>
</organism>